<dbReference type="EMBL" id="GG704916">
    <property type="protein sequence ID" value="EAS33189.3"/>
    <property type="molecule type" value="Genomic_DNA"/>
</dbReference>
<dbReference type="RefSeq" id="XP_001244772.1">
    <property type="nucleotide sequence ID" value="XM_001244771.2"/>
</dbReference>
<dbReference type="SMR" id="Q1DZQ0"/>
<dbReference type="FunCoup" id="Q1DZQ0">
    <property type="interactions" value="1038"/>
</dbReference>
<dbReference type="STRING" id="246410.Q1DZQ0"/>
<dbReference type="GeneID" id="4562991"/>
<dbReference type="KEGG" id="cim:CIMG_04213"/>
<dbReference type="VEuPathDB" id="FungiDB:CIMG_04213"/>
<dbReference type="InParanoid" id="Q1DZQ0"/>
<dbReference type="OMA" id="IWKEEGD"/>
<dbReference type="OrthoDB" id="364224at2759"/>
<dbReference type="Proteomes" id="UP000001261">
    <property type="component" value="Unassembled WGS sequence"/>
</dbReference>
<dbReference type="GO" id="GO:0030127">
    <property type="term" value="C:COPII vesicle coat"/>
    <property type="evidence" value="ECO:0007669"/>
    <property type="project" value="TreeGrafter"/>
</dbReference>
<dbReference type="GO" id="GO:0005789">
    <property type="term" value="C:endoplasmic reticulum membrane"/>
    <property type="evidence" value="ECO:0007669"/>
    <property type="project" value="UniProtKB-SubCell"/>
</dbReference>
<dbReference type="GO" id="GO:0031080">
    <property type="term" value="C:nuclear pore outer ring"/>
    <property type="evidence" value="ECO:0007669"/>
    <property type="project" value="TreeGrafter"/>
</dbReference>
<dbReference type="GO" id="GO:0005198">
    <property type="term" value="F:structural molecule activity"/>
    <property type="evidence" value="ECO:0007669"/>
    <property type="project" value="InterPro"/>
</dbReference>
<dbReference type="GO" id="GO:0090114">
    <property type="term" value="P:COPII-coated vesicle budding"/>
    <property type="evidence" value="ECO:0007669"/>
    <property type="project" value="TreeGrafter"/>
</dbReference>
<dbReference type="GO" id="GO:0051028">
    <property type="term" value="P:mRNA transport"/>
    <property type="evidence" value="ECO:0007669"/>
    <property type="project" value="UniProtKB-KW"/>
</dbReference>
<dbReference type="GO" id="GO:0032008">
    <property type="term" value="P:positive regulation of TOR signaling"/>
    <property type="evidence" value="ECO:0007669"/>
    <property type="project" value="TreeGrafter"/>
</dbReference>
<dbReference type="GO" id="GO:0032527">
    <property type="term" value="P:protein exit from endoplasmic reticulum"/>
    <property type="evidence" value="ECO:0007669"/>
    <property type="project" value="TreeGrafter"/>
</dbReference>
<dbReference type="GO" id="GO:0006606">
    <property type="term" value="P:protein import into nucleus"/>
    <property type="evidence" value="ECO:0007669"/>
    <property type="project" value="TreeGrafter"/>
</dbReference>
<dbReference type="FunFam" id="2.130.10.10:FF:000017">
    <property type="entry name" value="SEC13 homolog (S. cerevisiae)"/>
    <property type="match status" value="1"/>
</dbReference>
<dbReference type="Gene3D" id="2.130.10.10">
    <property type="entry name" value="YVTN repeat-like/Quinoprotein amine dehydrogenase"/>
    <property type="match status" value="1"/>
</dbReference>
<dbReference type="InterPro" id="IPR020472">
    <property type="entry name" value="G-protein_beta_WD-40_rep"/>
</dbReference>
<dbReference type="InterPro" id="IPR037363">
    <property type="entry name" value="Sec13/Seh1_fam"/>
</dbReference>
<dbReference type="InterPro" id="IPR015943">
    <property type="entry name" value="WD40/YVTN_repeat-like_dom_sf"/>
</dbReference>
<dbReference type="InterPro" id="IPR036322">
    <property type="entry name" value="WD40_repeat_dom_sf"/>
</dbReference>
<dbReference type="InterPro" id="IPR001680">
    <property type="entry name" value="WD40_rpt"/>
</dbReference>
<dbReference type="PANTHER" id="PTHR11024">
    <property type="entry name" value="NUCLEAR PORE COMPLEX PROTEIN SEC13 / SEH1 FAMILY MEMBER"/>
    <property type="match status" value="1"/>
</dbReference>
<dbReference type="PANTHER" id="PTHR11024:SF2">
    <property type="entry name" value="PROTEIN SEC13 HOMOLOG"/>
    <property type="match status" value="1"/>
</dbReference>
<dbReference type="Pfam" id="PF00400">
    <property type="entry name" value="WD40"/>
    <property type="match status" value="5"/>
</dbReference>
<dbReference type="PRINTS" id="PR00320">
    <property type="entry name" value="GPROTEINBRPT"/>
</dbReference>
<dbReference type="SMART" id="SM00320">
    <property type="entry name" value="WD40"/>
    <property type="match status" value="6"/>
</dbReference>
<dbReference type="SUPFAM" id="SSF50978">
    <property type="entry name" value="WD40 repeat-like"/>
    <property type="match status" value="1"/>
</dbReference>
<dbReference type="PROSITE" id="PS50082">
    <property type="entry name" value="WD_REPEATS_2"/>
    <property type="match status" value="3"/>
</dbReference>
<dbReference type="PROSITE" id="PS50294">
    <property type="entry name" value="WD_REPEATS_REGION"/>
    <property type="match status" value="1"/>
</dbReference>
<protein>
    <recommendedName>
        <fullName>Protein transport protein SEC13</fullName>
    </recommendedName>
</protein>
<feature type="chain" id="PRO_0000295412" description="Protein transport protein SEC13">
    <location>
        <begin position="1"/>
        <end position="304"/>
    </location>
</feature>
<feature type="repeat" description="WD 1">
    <location>
        <begin position="9"/>
        <end position="48"/>
    </location>
</feature>
<feature type="repeat" description="WD 2">
    <location>
        <begin position="53"/>
        <end position="94"/>
    </location>
</feature>
<feature type="repeat" description="WD 3">
    <location>
        <begin position="105"/>
        <end position="146"/>
    </location>
</feature>
<feature type="repeat" description="WD 4">
    <location>
        <begin position="150"/>
        <end position="204"/>
    </location>
</feature>
<feature type="repeat" description="WD 5">
    <location>
        <begin position="211"/>
        <end position="253"/>
    </location>
</feature>
<feature type="repeat" description="WD 6">
    <location>
        <begin position="259"/>
        <end position="298"/>
    </location>
</feature>
<gene>
    <name type="primary">SEC13</name>
    <name type="ORF">CIMG_04213</name>
</gene>
<name>SEC13_COCIM</name>
<proteinExistence type="inferred from homology"/>
<organism>
    <name type="scientific">Coccidioides immitis (strain RS)</name>
    <name type="common">Valley fever fungus</name>
    <dbReference type="NCBI Taxonomy" id="246410"/>
    <lineage>
        <taxon>Eukaryota</taxon>
        <taxon>Fungi</taxon>
        <taxon>Dikarya</taxon>
        <taxon>Ascomycota</taxon>
        <taxon>Pezizomycotina</taxon>
        <taxon>Eurotiomycetes</taxon>
        <taxon>Eurotiomycetidae</taxon>
        <taxon>Onygenales</taxon>
        <taxon>Onygenaceae</taxon>
        <taxon>Coccidioides</taxon>
    </lineage>
</organism>
<reference key="1">
    <citation type="journal article" date="2009" name="Genome Res.">
        <title>Comparative genomic analyses of the human fungal pathogens Coccidioides and their relatives.</title>
        <authorList>
            <person name="Sharpton T.J."/>
            <person name="Stajich J.E."/>
            <person name="Rounsley S.D."/>
            <person name="Gardner M.J."/>
            <person name="Wortman J.R."/>
            <person name="Jordar V.S."/>
            <person name="Maiti R."/>
            <person name="Kodira C.D."/>
            <person name="Neafsey D.E."/>
            <person name="Zeng Q."/>
            <person name="Hung C.-Y."/>
            <person name="McMahan C."/>
            <person name="Muszewska A."/>
            <person name="Grynberg M."/>
            <person name="Mandel M.A."/>
            <person name="Kellner E.M."/>
            <person name="Barker B.M."/>
            <person name="Galgiani J.N."/>
            <person name="Orbach M.J."/>
            <person name="Kirkland T.N."/>
            <person name="Cole G.T."/>
            <person name="Henn M.R."/>
            <person name="Birren B.W."/>
            <person name="Taylor J.W."/>
        </authorList>
    </citation>
    <scope>NUCLEOTIDE SEQUENCE [LARGE SCALE GENOMIC DNA]</scope>
    <source>
        <strain>RS</strain>
    </source>
</reference>
<reference key="2">
    <citation type="journal article" date="2010" name="Genome Res.">
        <title>Population genomic sequencing of Coccidioides fungi reveals recent hybridization and transposon control.</title>
        <authorList>
            <person name="Neafsey D.E."/>
            <person name="Barker B.M."/>
            <person name="Sharpton T.J."/>
            <person name="Stajich J.E."/>
            <person name="Park D.J."/>
            <person name="Whiston E."/>
            <person name="Hung C.-Y."/>
            <person name="McMahan C."/>
            <person name="White J."/>
            <person name="Sykes S."/>
            <person name="Heiman D."/>
            <person name="Young S."/>
            <person name="Zeng Q."/>
            <person name="Abouelleil A."/>
            <person name="Aftuck L."/>
            <person name="Bessette D."/>
            <person name="Brown A."/>
            <person name="FitzGerald M."/>
            <person name="Lui A."/>
            <person name="Macdonald J.P."/>
            <person name="Priest M."/>
            <person name="Orbach M.J."/>
            <person name="Galgiani J.N."/>
            <person name="Kirkland T.N."/>
            <person name="Cole G.T."/>
            <person name="Birren B.W."/>
            <person name="Henn M.R."/>
            <person name="Taylor J.W."/>
            <person name="Rounsley S.D."/>
        </authorList>
    </citation>
    <scope>GENOME REANNOTATION</scope>
    <source>
        <strain>RS</strain>
    </source>
</reference>
<sequence>MAQVITNSGHDDMIHDAGMDYYGRRLATCSSDKTIKIFELEGDSHRLIETLKGHEGAVWCVAWAHPKFGTILASSSYDGKVLIWREQSSAASTGSSWSRVFDFSLHTASVNMVSWAPHELGCVLACASSDGHVSVLEFRDNSWTHQIFHAHGMGVNSVSWAPAAAPGSVISATPSTGQIRRFVTGGSDNLVKIWDYNPETKTYATSHVLEGHTGWVRDVSWSPSILSRSYIASASQDKTVRIWTSDPSNPNEWTSHQLEFDAVVWRVSWSLSGNILAVSGGDNKVSLWKENLKGQWEKVKDIEE</sequence>
<accession>Q1DZQ0</accession>
<accession>J3KDG8</accession>
<evidence type="ECO:0000250" key="1"/>
<evidence type="ECO:0000250" key="2">
    <source>
        <dbReference type="UniProtKB" id="Q04491"/>
    </source>
</evidence>
<evidence type="ECO:0000305" key="3"/>
<keyword id="KW-0968">Cytoplasmic vesicle</keyword>
<keyword id="KW-0256">Endoplasmic reticulum</keyword>
<keyword id="KW-0931">ER-Golgi transport</keyword>
<keyword id="KW-0472">Membrane</keyword>
<keyword id="KW-0509">mRNA transport</keyword>
<keyword id="KW-0906">Nuclear pore complex</keyword>
<keyword id="KW-0539">Nucleus</keyword>
<keyword id="KW-0653">Protein transport</keyword>
<keyword id="KW-1185">Reference proteome</keyword>
<keyword id="KW-0677">Repeat</keyword>
<keyword id="KW-0811">Translocation</keyword>
<keyword id="KW-0813">Transport</keyword>
<keyword id="KW-0853">WD repeat</keyword>
<comment type="function">
    <text evidence="2">Component of the coat protein complex II (COPII) which promotes the formation of transport vesicles from the endoplasmic reticulum (ER). The coat has two main functions, the physical deformation of the endoplasmic reticulum membrane into vesicles and the selection of cargo molecules. It also functions as a component of the nuclear pore complex (NPC). NPC components, collectively referred to as nucleoporins (NUPs), can play the role of both NPC structural components and of docking or interaction partners for transiently associated nuclear transport factors. SEC13 is required for efficient mRNA export from the nucleus to the cytoplasm and for correct nuclear pore biogenesis and distribution (By similarity).</text>
</comment>
<comment type="subunit">
    <text evidence="2">The COPII coat is composed of at least 5 proteins: the SEC23/24 complex, the SEC13/31 complex, and the protein SAR1. Component of the nuclear pore complex (NPC). NPC constitutes the exclusive means of nucleocytoplasmic transport. NPCs allow the passive diffusion of ions and small molecules and the active, nuclear transport receptor-mediated bidirectional transport of macromolecules such as proteins, RNAs, ribonucleoparticles (RNPs), and ribosomal subunits across the nuclear envelope. Due to its 8-fold rotational symmetry, all subunits are present with 8 copies or multiples thereof.</text>
</comment>
<comment type="subcellular location">
    <subcellularLocation>
        <location evidence="1">Cytoplasmic vesicle</location>
        <location evidence="1">COPII-coated vesicle membrane</location>
        <topology evidence="1">Peripheral membrane protein</topology>
        <orientation evidence="1">Cytoplasmic side</orientation>
    </subcellularLocation>
    <subcellularLocation>
        <location evidence="1">Endoplasmic reticulum membrane</location>
        <topology evidence="1">Peripheral membrane protein</topology>
        <orientation evidence="1">Cytoplasmic side</orientation>
    </subcellularLocation>
    <subcellularLocation>
        <location evidence="2">Nucleus</location>
        <location evidence="2">Nuclear pore complex</location>
    </subcellularLocation>
</comment>
<comment type="similarity">
    <text evidence="3">Belongs to the WD repeat SEC13 family.</text>
</comment>